<sequence length="149" mass="16495">MNAYPWLEIPRTVRFSDTDAAGVMHFQHLLGWCHQAWEDSLEQFGIPVGAVFPGGRSDQPSVALPIVHCHADFRAPMYVGDAAVIHLLPKRIDPGCFEVVSEISLNTQKVASGCLQHLAIDAVTRQRCSLPEPIERWIEASTLGQIQPL</sequence>
<protein>
    <recommendedName>
        <fullName evidence="1">1,4-dihydroxy-2-naphthoyl-CoA hydrolase</fullName>
        <shortName evidence="1">DHNA-CoA hydrolase</shortName>
        <ecNumber evidence="1">3.1.2.28</ecNumber>
    </recommendedName>
    <alternativeName>
        <fullName evidence="1">DHNA-CoA thioesterase</fullName>
    </alternativeName>
</protein>
<name>DNCH_SYNS9</name>
<keyword id="KW-0378">Hydrolase</keyword>
<keyword id="KW-1185">Reference proteome</keyword>
<proteinExistence type="inferred from homology"/>
<dbReference type="EC" id="3.1.2.28" evidence="1"/>
<dbReference type="EMBL" id="CP000097">
    <property type="protein sequence ID" value="ABB27074.1"/>
    <property type="molecule type" value="Genomic_DNA"/>
</dbReference>
<dbReference type="RefSeq" id="WP_011360858.1">
    <property type="nucleotide sequence ID" value="NC_007513.1"/>
</dbReference>
<dbReference type="SMR" id="Q3AVZ5"/>
<dbReference type="STRING" id="316279.Syncc9902_2116"/>
<dbReference type="KEGG" id="sye:Syncc9902_2116"/>
<dbReference type="eggNOG" id="COG0824">
    <property type="taxonomic scope" value="Bacteria"/>
</dbReference>
<dbReference type="HOGENOM" id="CLU_101141_5_3_3"/>
<dbReference type="OrthoDB" id="9800856at2"/>
<dbReference type="UniPathway" id="UPA00995"/>
<dbReference type="UniPathway" id="UPA01057">
    <property type="reaction ID" value="UER01033"/>
</dbReference>
<dbReference type="Proteomes" id="UP000002712">
    <property type="component" value="Chromosome"/>
</dbReference>
<dbReference type="GO" id="GO:0061522">
    <property type="term" value="F:1,4-dihydroxy-2-naphthoyl-CoA thioesterase activity"/>
    <property type="evidence" value="ECO:0007669"/>
    <property type="project" value="UniProtKB-EC"/>
</dbReference>
<dbReference type="GO" id="GO:0042372">
    <property type="term" value="P:phylloquinone biosynthetic process"/>
    <property type="evidence" value="ECO:0007669"/>
    <property type="project" value="UniProtKB-UniRule"/>
</dbReference>
<dbReference type="CDD" id="cd00586">
    <property type="entry name" value="4HBT"/>
    <property type="match status" value="1"/>
</dbReference>
<dbReference type="Gene3D" id="3.10.129.10">
    <property type="entry name" value="Hotdog Thioesterase"/>
    <property type="match status" value="1"/>
</dbReference>
<dbReference type="HAMAP" id="MF_02101">
    <property type="entry name" value="DHNA_CoA_hydrolase"/>
    <property type="match status" value="1"/>
</dbReference>
<dbReference type="InterPro" id="IPR022829">
    <property type="entry name" value="DHNA_CoA_hydrolase"/>
</dbReference>
<dbReference type="InterPro" id="IPR029069">
    <property type="entry name" value="HotDog_dom_sf"/>
</dbReference>
<dbReference type="Pfam" id="PF13279">
    <property type="entry name" value="4HBT_2"/>
    <property type="match status" value="1"/>
</dbReference>
<dbReference type="SUPFAM" id="SSF54637">
    <property type="entry name" value="Thioesterase/thiol ester dehydrase-isomerase"/>
    <property type="match status" value="1"/>
</dbReference>
<comment type="function">
    <text evidence="1">Catalyzes the hydrolysis of 1,4-dihydroxy-2-naphthoyl-CoA (DHNA-CoA) to 1,4-dihydroxy-2-naphthoate (DHNA), a reaction involved in phylloquinone (vitamin K1) biosynthesis.</text>
</comment>
<comment type="catalytic activity">
    <reaction evidence="1">
        <text>1,4-dihydroxy-2-naphthoyl-CoA + H2O = 1,4-dihydroxy-2-naphthoate + CoA + H(+)</text>
        <dbReference type="Rhea" id="RHEA:26309"/>
        <dbReference type="ChEBI" id="CHEBI:11173"/>
        <dbReference type="ChEBI" id="CHEBI:15377"/>
        <dbReference type="ChEBI" id="CHEBI:15378"/>
        <dbReference type="ChEBI" id="CHEBI:57287"/>
        <dbReference type="ChEBI" id="CHEBI:58897"/>
        <dbReference type="EC" id="3.1.2.28"/>
    </reaction>
</comment>
<comment type="pathway">
    <text evidence="1">Cofactor biosynthesis; phylloquinone biosynthesis.</text>
</comment>
<comment type="pathway">
    <text evidence="1">Quinol/quinone metabolism; 1,4-dihydroxy-2-naphthoate biosynthesis; 1,4-dihydroxy-2-naphthoate from chorismate: step 7/7.</text>
</comment>
<comment type="similarity">
    <text evidence="1">Belongs to the 4-hydroxybenzoyl-CoA thioesterase family. DHNA-CoA hydrolase subfamily.</text>
</comment>
<reference key="1">
    <citation type="submission" date="2005-08" db="EMBL/GenBank/DDBJ databases">
        <title>Complete sequence of Synechococcus sp. CC9902.</title>
        <authorList>
            <person name="Copeland A."/>
            <person name="Lucas S."/>
            <person name="Lapidus A."/>
            <person name="Barry K."/>
            <person name="Detter J.C."/>
            <person name="Glavina T."/>
            <person name="Hammon N."/>
            <person name="Israni S."/>
            <person name="Pitluck S."/>
            <person name="Martinez M."/>
            <person name="Schmutz J."/>
            <person name="Larimer F."/>
            <person name="Land M."/>
            <person name="Kyrpides N."/>
            <person name="Ivanova N."/>
            <person name="Richardson P."/>
        </authorList>
    </citation>
    <scope>NUCLEOTIDE SEQUENCE [LARGE SCALE GENOMIC DNA]</scope>
    <source>
        <strain>CC9902</strain>
    </source>
</reference>
<evidence type="ECO:0000255" key="1">
    <source>
        <dbReference type="HAMAP-Rule" id="MF_02101"/>
    </source>
</evidence>
<gene>
    <name type="ordered locus">Syncc9902_2116</name>
</gene>
<organism>
    <name type="scientific">Synechococcus sp. (strain CC9902)</name>
    <dbReference type="NCBI Taxonomy" id="316279"/>
    <lineage>
        <taxon>Bacteria</taxon>
        <taxon>Bacillati</taxon>
        <taxon>Cyanobacteriota</taxon>
        <taxon>Cyanophyceae</taxon>
        <taxon>Synechococcales</taxon>
        <taxon>Synechococcaceae</taxon>
        <taxon>Synechococcus</taxon>
    </lineage>
</organism>
<feature type="chain" id="PRO_0000377032" description="1,4-dihydroxy-2-naphthoyl-CoA hydrolase">
    <location>
        <begin position="1"/>
        <end position="149"/>
    </location>
</feature>
<feature type="active site" evidence="1">
    <location>
        <position position="19"/>
    </location>
</feature>
<accession>Q3AVZ5</accession>